<sequence>MSRHYEVVFLVHPDQSEQVPAMIERYKSLIEGGNGTIHRLEDWGRRQLAYPIQNLVKAHYVLLNIEVDQAVLSELVESFRFNDAVLRHLVVKRDGADTEQSLIMKSKDEKGDKPERSERRRRDDEEGEAPAANDNDGDNAEAA</sequence>
<keyword id="KW-0687">Ribonucleoprotein</keyword>
<keyword id="KW-0689">Ribosomal protein</keyword>
<keyword id="KW-0694">RNA-binding</keyword>
<keyword id="KW-0699">rRNA-binding</keyword>
<gene>
    <name evidence="1" type="primary">rpsF</name>
    <name type="ordered locus">XAC1620</name>
</gene>
<accession>Q8PM14</accession>
<protein>
    <recommendedName>
        <fullName evidence="1">Small ribosomal subunit protein bS6</fullName>
    </recommendedName>
    <alternativeName>
        <fullName evidence="3">30S ribosomal protein S6</fullName>
    </alternativeName>
</protein>
<feature type="chain" id="PRO_0000176877" description="Small ribosomal subunit protein bS6">
    <location>
        <begin position="1"/>
        <end position="143"/>
    </location>
</feature>
<feature type="region of interest" description="Disordered" evidence="2">
    <location>
        <begin position="98"/>
        <end position="143"/>
    </location>
</feature>
<feature type="compositionally biased region" description="Basic and acidic residues" evidence="2">
    <location>
        <begin position="105"/>
        <end position="124"/>
    </location>
</feature>
<reference key="1">
    <citation type="journal article" date="2002" name="Nature">
        <title>Comparison of the genomes of two Xanthomonas pathogens with differing host specificities.</title>
        <authorList>
            <person name="da Silva A.C.R."/>
            <person name="Ferro J.A."/>
            <person name="Reinach F.C."/>
            <person name="Farah C.S."/>
            <person name="Furlan L.R."/>
            <person name="Quaggio R.B."/>
            <person name="Monteiro-Vitorello C.B."/>
            <person name="Van Sluys M.A."/>
            <person name="Almeida N.F. Jr."/>
            <person name="Alves L.M.C."/>
            <person name="do Amaral A.M."/>
            <person name="Bertolini M.C."/>
            <person name="Camargo L.E.A."/>
            <person name="Camarotte G."/>
            <person name="Cannavan F."/>
            <person name="Cardozo J."/>
            <person name="Chambergo F."/>
            <person name="Ciapina L.P."/>
            <person name="Cicarelli R.M.B."/>
            <person name="Coutinho L.L."/>
            <person name="Cursino-Santos J.R."/>
            <person name="El-Dorry H."/>
            <person name="Faria J.B."/>
            <person name="Ferreira A.J.S."/>
            <person name="Ferreira R.C.C."/>
            <person name="Ferro M.I.T."/>
            <person name="Formighieri E.F."/>
            <person name="Franco M.C."/>
            <person name="Greggio C.C."/>
            <person name="Gruber A."/>
            <person name="Katsuyama A.M."/>
            <person name="Kishi L.T."/>
            <person name="Leite R.P."/>
            <person name="Lemos E.G.M."/>
            <person name="Lemos M.V.F."/>
            <person name="Locali E.C."/>
            <person name="Machado M.A."/>
            <person name="Madeira A.M.B.N."/>
            <person name="Martinez-Rossi N.M."/>
            <person name="Martins E.C."/>
            <person name="Meidanis J."/>
            <person name="Menck C.F.M."/>
            <person name="Miyaki C.Y."/>
            <person name="Moon D.H."/>
            <person name="Moreira L.M."/>
            <person name="Novo M.T.M."/>
            <person name="Okura V.K."/>
            <person name="Oliveira M.C."/>
            <person name="Oliveira V.R."/>
            <person name="Pereira H.A."/>
            <person name="Rossi A."/>
            <person name="Sena J.A.D."/>
            <person name="Silva C."/>
            <person name="de Souza R.F."/>
            <person name="Spinola L.A.F."/>
            <person name="Takita M.A."/>
            <person name="Tamura R.E."/>
            <person name="Teixeira E.C."/>
            <person name="Tezza R.I.D."/>
            <person name="Trindade dos Santos M."/>
            <person name="Truffi D."/>
            <person name="Tsai S.M."/>
            <person name="White F.F."/>
            <person name="Setubal J.C."/>
            <person name="Kitajima J.P."/>
        </authorList>
    </citation>
    <scope>NUCLEOTIDE SEQUENCE [LARGE SCALE GENOMIC DNA]</scope>
    <source>
        <strain>306</strain>
    </source>
</reference>
<comment type="function">
    <text evidence="1">Binds together with bS18 to 16S ribosomal RNA.</text>
</comment>
<comment type="similarity">
    <text evidence="1">Belongs to the bacterial ribosomal protein bS6 family.</text>
</comment>
<dbReference type="EMBL" id="AE008923">
    <property type="protein sequence ID" value="AAM36488.1"/>
    <property type="molecule type" value="Genomic_DNA"/>
</dbReference>
<dbReference type="RefSeq" id="WP_003485869.1">
    <property type="nucleotide sequence ID" value="NC_003919.1"/>
</dbReference>
<dbReference type="SMR" id="Q8PM14"/>
<dbReference type="GeneID" id="97510000"/>
<dbReference type="KEGG" id="xac:XAC1620"/>
<dbReference type="eggNOG" id="COG0360">
    <property type="taxonomic scope" value="Bacteria"/>
</dbReference>
<dbReference type="HOGENOM" id="CLU_113441_6_0_6"/>
<dbReference type="Proteomes" id="UP000000576">
    <property type="component" value="Chromosome"/>
</dbReference>
<dbReference type="GO" id="GO:0022627">
    <property type="term" value="C:cytosolic small ribosomal subunit"/>
    <property type="evidence" value="ECO:0007669"/>
    <property type="project" value="TreeGrafter"/>
</dbReference>
<dbReference type="GO" id="GO:0070181">
    <property type="term" value="F:small ribosomal subunit rRNA binding"/>
    <property type="evidence" value="ECO:0007669"/>
    <property type="project" value="TreeGrafter"/>
</dbReference>
<dbReference type="GO" id="GO:0003735">
    <property type="term" value="F:structural constituent of ribosome"/>
    <property type="evidence" value="ECO:0007669"/>
    <property type="project" value="InterPro"/>
</dbReference>
<dbReference type="GO" id="GO:0006412">
    <property type="term" value="P:translation"/>
    <property type="evidence" value="ECO:0007669"/>
    <property type="project" value="UniProtKB-UniRule"/>
</dbReference>
<dbReference type="CDD" id="cd00473">
    <property type="entry name" value="bS6"/>
    <property type="match status" value="1"/>
</dbReference>
<dbReference type="FunFam" id="3.30.70.60:FF:000003">
    <property type="entry name" value="30S ribosomal protein S6"/>
    <property type="match status" value="1"/>
</dbReference>
<dbReference type="Gene3D" id="3.30.70.60">
    <property type="match status" value="1"/>
</dbReference>
<dbReference type="HAMAP" id="MF_00360">
    <property type="entry name" value="Ribosomal_bS6"/>
    <property type="match status" value="1"/>
</dbReference>
<dbReference type="InterPro" id="IPR000529">
    <property type="entry name" value="Ribosomal_bS6"/>
</dbReference>
<dbReference type="InterPro" id="IPR035980">
    <property type="entry name" value="Ribosomal_bS6_sf"/>
</dbReference>
<dbReference type="InterPro" id="IPR020814">
    <property type="entry name" value="Ribosomal_S6_plastid/chlpt"/>
</dbReference>
<dbReference type="InterPro" id="IPR014717">
    <property type="entry name" value="Transl_elong_EF1B/ribsomal_bS6"/>
</dbReference>
<dbReference type="NCBIfam" id="TIGR00166">
    <property type="entry name" value="S6"/>
    <property type="match status" value="1"/>
</dbReference>
<dbReference type="PANTHER" id="PTHR21011">
    <property type="entry name" value="MITOCHONDRIAL 28S RIBOSOMAL PROTEIN S6"/>
    <property type="match status" value="1"/>
</dbReference>
<dbReference type="PANTHER" id="PTHR21011:SF1">
    <property type="entry name" value="SMALL RIBOSOMAL SUBUNIT PROTEIN BS6M"/>
    <property type="match status" value="1"/>
</dbReference>
<dbReference type="Pfam" id="PF01250">
    <property type="entry name" value="Ribosomal_S6"/>
    <property type="match status" value="1"/>
</dbReference>
<dbReference type="SUPFAM" id="SSF54995">
    <property type="entry name" value="Ribosomal protein S6"/>
    <property type="match status" value="1"/>
</dbReference>
<organism>
    <name type="scientific">Xanthomonas axonopodis pv. citri (strain 306)</name>
    <dbReference type="NCBI Taxonomy" id="190486"/>
    <lineage>
        <taxon>Bacteria</taxon>
        <taxon>Pseudomonadati</taxon>
        <taxon>Pseudomonadota</taxon>
        <taxon>Gammaproteobacteria</taxon>
        <taxon>Lysobacterales</taxon>
        <taxon>Lysobacteraceae</taxon>
        <taxon>Xanthomonas</taxon>
    </lineage>
</organism>
<evidence type="ECO:0000255" key="1">
    <source>
        <dbReference type="HAMAP-Rule" id="MF_00360"/>
    </source>
</evidence>
<evidence type="ECO:0000256" key="2">
    <source>
        <dbReference type="SAM" id="MobiDB-lite"/>
    </source>
</evidence>
<evidence type="ECO:0000305" key="3"/>
<name>RS6_XANAC</name>
<proteinExistence type="inferred from homology"/>